<sequence length="298" mass="33630">MKAENVKLGIAPIGWTNDDLPEIGKENTFEQCVSEMALAGFTGSEVGSKYPRDIDVLKRKLDLRGIQICNAWFSTFFVDGKKEETIKGFIEHRDFLHAMGAKVIGCSEQSRSIQGQKKAIFKEKTIFTEAEWQLLAEGYNELAKLAAEKGMKVCLHHHMGTGIQTPAEIDKYMEITNDDVYLLFDSGHLYYSEGSQQVMLEVLEKYIHRVVHVHLKDVRDEVVAEVKANDLSFLEGVVKGTFTVPGDGVIDFKPIFDILEKYDYKGWMVVEAEQDPAIANPLEYAIKGRQYIREVAGV</sequence>
<protein>
    <recommendedName>
        <fullName evidence="1">Inosose dehydratase</fullName>
        <ecNumber evidence="1">4.2.1.44</ecNumber>
    </recommendedName>
    <alternativeName>
        <fullName evidence="1">2-keto-myo-inositol dehydratase</fullName>
        <shortName evidence="1">2KMI dehydratase</shortName>
    </alternativeName>
</protein>
<proteinExistence type="inferred from homology"/>
<comment type="function">
    <text evidence="1">Catalyzes the dehydration of inosose (2-keto-myo-inositol, 2KMI or 2,4,6/3,5-pentahydroxycyclohexanone) to 3D-(3,5/4)-trihydroxycyclohexane-1,2-dione (D-2,3-diketo-4-deoxy-epi-inositol).</text>
</comment>
<comment type="catalytic activity">
    <reaction evidence="1">
        <text>scyllo-inosose = 3D-3,5/4-trihydroxycyclohexane-1,2-dione + H2O</text>
        <dbReference type="Rhea" id="RHEA:14065"/>
        <dbReference type="ChEBI" id="CHEBI:15377"/>
        <dbReference type="ChEBI" id="CHEBI:17811"/>
        <dbReference type="ChEBI" id="CHEBI:28446"/>
        <dbReference type="EC" id="4.2.1.44"/>
    </reaction>
</comment>
<comment type="cofactor">
    <cofactor evidence="1">
        <name>glutathione</name>
        <dbReference type="ChEBI" id="CHEBI:57925"/>
    </cofactor>
</comment>
<comment type="cofactor">
    <cofactor evidence="1">
        <name>Co(2+)</name>
        <dbReference type="ChEBI" id="CHEBI:48828"/>
    </cofactor>
    <cofactor evidence="1">
        <name>Mn(2+)</name>
        <dbReference type="ChEBI" id="CHEBI:29035"/>
    </cofactor>
</comment>
<comment type="similarity">
    <text evidence="1">Belongs to the IolE/MocC family.</text>
</comment>
<name>IOLE_HISS1</name>
<keyword id="KW-0170">Cobalt</keyword>
<keyword id="KW-0456">Lyase</keyword>
<keyword id="KW-0464">Manganese</keyword>
<reference key="1">
    <citation type="journal article" date="2007" name="J. Bacteriol.">
        <title>Complete genome sequence of Haemophilus somnus (Histophilus somni) strain 129Pt and comparison to Haemophilus ducreyi 35000HP and Haemophilus influenzae Rd.</title>
        <authorList>
            <person name="Challacombe J.F."/>
            <person name="Duncan A.J."/>
            <person name="Brettin T.S."/>
            <person name="Bruce D."/>
            <person name="Chertkov O."/>
            <person name="Detter J.C."/>
            <person name="Han C.S."/>
            <person name="Misra M."/>
            <person name="Richardson P."/>
            <person name="Tapia R."/>
            <person name="Thayer N."/>
            <person name="Xie G."/>
            <person name="Inzana T.J."/>
        </authorList>
    </citation>
    <scope>NUCLEOTIDE SEQUENCE [LARGE SCALE GENOMIC DNA]</scope>
    <source>
        <strain>129Pt</strain>
    </source>
</reference>
<dbReference type="EC" id="4.2.1.44" evidence="1"/>
<dbReference type="EMBL" id="CP000436">
    <property type="protein sequence ID" value="ABI25845.1"/>
    <property type="molecule type" value="Genomic_DNA"/>
</dbReference>
<dbReference type="SMR" id="Q0I5A5"/>
<dbReference type="KEGG" id="hso:HS_1577"/>
<dbReference type="eggNOG" id="COG1082">
    <property type="taxonomic scope" value="Bacteria"/>
</dbReference>
<dbReference type="HOGENOM" id="CLU_059523_0_0_6"/>
<dbReference type="GO" id="GO:0030145">
    <property type="term" value="F:manganese ion binding"/>
    <property type="evidence" value="ECO:0007669"/>
    <property type="project" value="UniProtKB-UniRule"/>
</dbReference>
<dbReference type="GO" id="GO:0050114">
    <property type="term" value="F:myo-inosose-2 dehydratase activity"/>
    <property type="evidence" value="ECO:0007669"/>
    <property type="project" value="UniProtKB-UniRule"/>
</dbReference>
<dbReference type="GO" id="GO:0019310">
    <property type="term" value="P:inositol catabolic process"/>
    <property type="evidence" value="ECO:0007669"/>
    <property type="project" value="UniProtKB-UniRule"/>
</dbReference>
<dbReference type="Gene3D" id="3.20.20.150">
    <property type="entry name" value="Divalent-metal-dependent TIM barrel enzymes"/>
    <property type="match status" value="1"/>
</dbReference>
<dbReference type="HAMAP" id="MF_01672">
    <property type="entry name" value="IolE"/>
    <property type="match status" value="1"/>
</dbReference>
<dbReference type="InterPro" id="IPR023952">
    <property type="entry name" value="IolE"/>
</dbReference>
<dbReference type="InterPro" id="IPR030823">
    <property type="entry name" value="IolE/MocC"/>
</dbReference>
<dbReference type="InterPro" id="IPR050312">
    <property type="entry name" value="IolE/XylAMocC-like"/>
</dbReference>
<dbReference type="InterPro" id="IPR036237">
    <property type="entry name" value="Xyl_isomerase-like_sf"/>
</dbReference>
<dbReference type="InterPro" id="IPR013022">
    <property type="entry name" value="Xyl_isomerase-like_TIM-brl"/>
</dbReference>
<dbReference type="NCBIfam" id="TIGR04379">
    <property type="entry name" value="myo_inos_iolE"/>
    <property type="match status" value="1"/>
</dbReference>
<dbReference type="PANTHER" id="PTHR12110">
    <property type="entry name" value="HYDROXYPYRUVATE ISOMERASE"/>
    <property type="match status" value="1"/>
</dbReference>
<dbReference type="PANTHER" id="PTHR12110:SF41">
    <property type="entry name" value="INOSOSE DEHYDRATASE"/>
    <property type="match status" value="1"/>
</dbReference>
<dbReference type="Pfam" id="PF01261">
    <property type="entry name" value="AP_endonuc_2"/>
    <property type="match status" value="1"/>
</dbReference>
<dbReference type="SUPFAM" id="SSF51658">
    <property type="entry name" value="Xylose isomerase-like"/>
    <property type="match status" value="1"/>
</dbReference>
<evidence type="ECO:0000255" key="1">
    <source>
        <dbReference type="HAMAP-Rule" id="MF_01672"/>
    </source>
</evidence>
<accession>Q0I5A5</accession>
<organism>
    <name type="scientific">Histophilus somni (strain 129Pt)</name>
    <name type="common">Haemophilus somnus</name>
    <dbReference type="NCBI Taxonomy" id="205914"/>
    <lineage>
        <taxon>Bacteria</taxon>
        <taxon>Pseudomonadati</taxon>
        <taxon>Pseudomonadota</taxon>
        <taxon>Gammaproteobacteria</taxon>
        <taxon>Pasteurellales</taxon>
        <taxon>Pasteurellaceae</taxon>
        <taxon>Histophilus</taxon>
    </lineage>
</organism>
<gene>
    <name evidence="1" type="primary">iolE</name>
    <name type="ordered locus">HS_1577</name>
</gene>
<feature type="chain" id="PRO_0000352369" description="Inosose dehydratase">
    <location>
        <begin position="1"/>
        <end position="298"/>
    </location>
</feature>